<sequence length="318" mass="35835">MEKLVTQQVQNVDPKQSEILNISEIPAENPTETPIISKQKLLEAGVYFGHKASQWHPKMAQFLLKKKRNETHIIDVLKTQKMLEIAYKLVEKFAQKGAKFIFVGTKKQAKKVIEEQAVRTNSIYVSGRWLGGTLTNNRTILSRLKTMENLEKQAAENFQGYTKKEKLAKQKQLAKLQKNLNGIKGLKDVPLFSLIMLVADPLKDAIAVKEARKKGIKIIGITDSNVDPSLVDFGIPANDDSTKSITLIFTVLADAIASAKGGKKLFAYQSDENIILPEDPEKELKQTRYRNNSFEKFARQKNTLKESQVLKPNTEIQA</sequence>
<reference key="1">
    <citation type="journal article" date="2005" name="J. Bacteriol.">
        <title>Swine and poultry pathogens: the complete genome sequences of two strains of Mycoplasma hyopneumoniae and a strain of Mycoplasma synoviae.</title>
        <authorList>
            <person name="Vasconcelos A.T.R."/>
            <person name="Ferreira H.B."/>
            <person name="Bizarro C.V."/>
            <person name="Bonatto S.L."/>
            <person name="Carvalho M.O."/>
            <person name="Pinto P.M."/>
            <person name="Almeida D.F."/>
            <person name="Almeida L.G.P."/>
            <person name="Almeida R."/>
            <person name="Alves-Junior L."/>
            <person name="Assuncao E.N."/>
            <person name="Azevedo V.A.C."/>
            <person name="Bogo M.R."/>
            <person name="Brigido M.M."/>
            <person name="Brocchi M."/>
            <person name="Burity H.A."/>
            <person name="Camargo A.A."/>
            <person name="Camargo S.S."/>
            <person name="Carepo M.S."/>
            <person name="Carraro D.M."/>
            <person name="de Mattos Cascardo J.C."/>
            <person name="Castro L.A."/>
            <person name="Cavalcanti G."/>
            <person name="Chemale G."/>
            <person name="Collevatti R.G."/>
            <person name="Cunha C.W."/>
            <person name="Dallagiovanna B."/>
            <person name="Dambros B.P."/>
            <person name="Dellagostin O.A."/>
            <person name="Falcao C."/>
            <person name="Fantinatti-Garboggini F."/>
            <person name="Felipe M.S.S."/>
            <person name="Fiorentin L."/>
            <person name="Franco G.R."/>
            <person name="Freitas N.S.A."/>
            <person name="Frias D."/>
            <person name="Grangeiro T.B."/>
            <person name="Grisard E.C."/>
            <person name="Guimaraes C.T."/>
            <person name="Hungria M."/>
            <person name="Jardim S.N."/>
            <person name="Krieger M.A."/>
            <person name="Laurino J.P."/>
            <person name="Lima L.F.A."/>
            <person name="Lopes M.I."/>
            <person name="Loreto E.L.S."/>
            <person name="Madeira H.M.F."/>
            <person name="Manfio G.P."/>
            <person name="Maranhao A.Q."/>
            <person name="Martinkovics C.T."/>
            <person name="Medeiros S.R.B."/>
            <person name="Moreira M.A.M."/>
            <person name="Neiva M."/>
            <person name="Ramalho-Neto C.E."/>
            <person name="Nicolas M.F."/>
            <person name="Oliveira S.C."/>
            <person name="Paixao R.F.C."/>
            <person name="Pedrosa F.O."/>
            <person name="Pena S.D.J."/>
            <person name="Pereira M."/>
            <person name="Pereira-Ferrari L."/>
            <person name="Piffer I."/>
            <person name="Pinto L.S."/>
            <person name="Potrich D.P."/>
            <person name="Salim A.C.M."/>
            <person name="Santos F.R."/>
            <person name="Schmitt R."/>
            <person name="Schneider M.P.C."/>
            <person name="Schrank A."/>
            <person name="Schrank I.S."/>
            <person name="Schuck A.F."/>
            <person name="Seuanez H.N."/>
            <person name="Silva D.W."/>
            <person name="Silva R."/>
            <person name="Silva S.C."/>
            <person name="Soares C.M.A."/>
            <person name="Souza K.R.L."/>
            <person name="Souza R.C."/>
            <person name="Staats C.C."/>
            <person name="Steffens M.B.R."/>
            <person name="Teixeira S.M.R."/>
            <person name="Urmenyi T.P."/>
            <person name="Vainstein M.H."/>
            <person name="Zuccherato L.W."/>
            <person name="Simpson A.J.G."/>
            <person name="Zaha A."/>
        </authorList>
    </citation>
    <scope>NUCLEOTIDE SEQUENCE [LARGE SCALE GENOMIC DNA]</scope>
    <source>
        <strain>J / ATCC 25934 / NCTC 10110</strain>
    </source>
</reference>
<accession>Q4AAW8</accession>
<protein>
    <recommendedName>
        <fullName evidence="1">Small ribosomal subunit protein uS2</fullName>
    </recommendedName>
    <alternativeName>
        <fullName evidence="2">30S ribosomal protein S2</fullName>
    </alternativeName>
</protein>
<evidence type="ECO:0000255" key="1">
    <source>
        <dbReference type="HAMAP-Rule" id="MF_00291"/>
    </source>
</evidence>
<evidence type="ECO:0000305" key="2"/>
<dbReference type="EMBL" id="AE017243">
    <property type="protein sequence ID" value="AAZ44145.2"/>
    <property type="molecule type" value="Genomic_DNA"/>
</dbReference>
<dbReference type="RefSeq" id="WP_193325077.1">
    <property type="nucleotide sequence ID" value="NC_007295.1"/>
</dbReference>
<dbReference type="SMR" id="Q4AAW8"/>
<dbReference type="GeneID" id="41334340"/>
<dbReference type="KEGG" id="mhj:MHJ_0051"/>
<dbReference type="eggNOG" id="COG0052">
    <property type="taxonomic scope" value="Bacteria"/>
</dbReference>
<dbReference type="HOGENOM" id="CLU_040318_0_0_14"/>
<dbReference type="Proteomes" id="UP000000548">
    <property type="component" value="Chromosome"/>
</dbReference>
<dbReference type="GO" id="GO:0022627">
    <property type="term" value="C:cytosolic small ribosomal subunit"/>
    <property type="evidence" value="ECO:0007669"/>
    <property type="project" value="TreeGrafter"/>
</dbReference>
<dbReference type="GO" id="GO:0003735">
    <property type="term" value="F:structural constituent of ribosome"/>
    <property type="evidence" value="ECO:0007669"/>
    <property type="project" value="InterPro"/>
</dbReference>
<dbReference type="GO" id="GO:0006412">
    <property type="term" value="P:translation"/>
    <property type="evidence" value="ECO:0007669"/>
    <property type="project" value="UniProtKB-UniRule"/>
</dbReference>
<dbReference type="CDD" id="cd01425">
    <property type="entry name" value="RPS2"/>
    <property type="match status" value="1"/>
</dbReference>
<dbReference type="Gene3D" id="3.40.50.10490">
    <property type="entry name" value="Glucose-6-phosphate isomerase like protein, domain 1"/>
    <property type="match status" value="1"/>
</dbReference>
<dbReference type="Gene3D" id="1.10.287.610">
    <property type="entry name" value="Helix hairpin bin"/>
    <property type="match status" value="1"/>
</dbReference>
<dbReference type="HAMAP" id="MF_00291_B">
    <property type="entry name" value="Ribosomal_uS2_B"/>
    <property type="match status" value="1"/>
</dbReference>
<dbReference type="InterPro" id="IPR001865">
    <property type="entry name" value="Ribosomal_uS2"/>
</dbReference>
<dbReference type="InterPro" id="IPR005706">
    <property type="entry name" value="Ribosomal_uS2_bac/mit/plastid"/>
</dbReference>
<dbReference type="InterPro" id="IPR023591">
    <property type="entry name" value="Ribosomal_uS2_flav_dom_sf"/>
</dbReference>
<dbReference type="NCBIfam" id="TIGR01011">
    <property type="entry name" value="rpsB_bact"/>
    <property type="match status" value="1"/>
</dbReference>
<dbReference type="PANTHER" id="PTHR12534">
    <property type="entry name" value="30S RIBOSOMAL PROTEIN S2 PROKARYOTIC AND ORGANELLAR"/>
    <property type="match status" value="1"/>
</dbReference>
<dbReference type="PANTHER" id="PTHR12534:SF0">
    <property type="entry name" value="SMALL RIBOSOMAL SUBUNIT PROTEIN US2M"/>
    <property type="match status" value="1"/>
</dbReference>
<dbReference type="Pfam" id="PF00318">
    <property type="entry name" value="Ribosomal_S2"/>
    <property type="match status" value="1"/>
</dbReference>
<dbReference type="PRINTS" id="PR00395">
    <property type="entry name" value="RIBOSOMALS2"/>
</dbReference>
<dbReference type="SUPFAM" id="SSF52313">
    <property type="entry name" value="Ribosomal protein S2"/>
    <property type="match status" value="1"/>
</dbReference>
<gene>
    <name evidence="1" type="primary">rpsB</name>
    <name type="ordered locus">MHJ_0051</name>
</gene>
<name>RS2_MESHJ</name>
<feature type="chain" id="PRO_0000352014" description="Small ribosomal subunit protein uS2">
    <location>
        <begin position="1"/>
        <end position="318"/>
    </location>
</feature>
<keyword id="KW-0687">Ribonucleoprotein</keyword>
<keyword id="KW-0689">Ribosomal protein</keyword>
<organism>
    <name type="scientific">Mesomycoplasma hyopneumoniae (strain J / ATCC 25934 / NCTC 10110)</name>
    <name type="common">Mycoplasma hyopneumoniae</name>
    <dbReference type="NCBI Taxonomy" id="262719"/>
    <lineage>
        <taxon>Bacteria</taxon>
        <taxon>Bacillati</taxon>
        <taxon>Mycoplasmatota</taxon>
        <taxon>Mycoplasmoidales</taxon>
        <taxon>Metamycoplasmataceae</taxon>
        <taxon>Mesomycoplasma</taxon>
    </lineage>
</organism>
<comment type="similarity">
    <text evidence="1">Belongs to the universal ribosomal protein uS2 family.</text>
</comment>
<proteinExistence type="inferred from homology"/>